<evidence type="ECO:0000255" key="1">
    <source>
        <dbReference type="HAMAP-Rule" id="MF_00366"/>
    </source>
</evidence>
<gene>
    <name evidence="1" type="primary">rpoZ</name>
    <name type="ordered locus">ABBFA_000339</name>
</gene>
<dbReference type="EC" id="2.7.7.6" evidence="1"/>
<dbReference type="EMBL" id="CP001172">
    <property type="protein sequence ID" value="ACJ56487.1"/>
    <property type="molecule type" value="Genomic_DNA"/>
</dbReference>
<dbReference type="RefSeq" id="WP_000135049.1">
    <property type="nucleotide sequence ID" value="NZ_CP001172.1"/>
</dbReference>
<dbReference type="SMR" id="B7GVQ9"/>
<dbReference type="GeneID" id="92895409"/>
<dbReference type="HOGENOM" id="CLU_125406_5_3_6"/>
<dbReference type="Proteomes" id="UP000006924">
    <property type="component" value="Chromosome"/>
</dbReference>
<dbReference type="GO" id="GO:0000428">
    <property type="term" value="C:DNA-directed RNA polymerase complex"/>
    <property type="evidence" value="ECO:0007669"/>
    <property type="project" value="UniProtKB-KW"/>
</dbReference>
<dbReference type="GO" id="GO:0003677">
    <property type="term" value="F:DNA binding"/>
    <property type="evidence" value="ECO:0007669"/>
    <property type="project" value="UniProtKB-UniRule"/>
</dbReference>
<dbReference type="GO" id="GO:0003899">
    <property type="term" value="F:DNA-directed RNA polymerase activity"/>
    <property type="evidence" value="ECO:0007669"/>
    <property type="project" value="UniProtKB-UniRule"/>
</dbReference>
<dbReference type="GO" id="GO:0006351">
    <property type="term" value="P:DNA-templated transcription"/>
    <property type="evidence" value="ECO:0007669"/>
    <property type="project" value="UniProtKB-UniRule"/>
</dbReference>
<dbReference type="Gene3D" id="3.90.940.10">
    <property type="match status" value="1"/>
</dbReference>
<dbReference type="HAMAP" id="MF_00366">
    <property type="entry name" value="RNApol_bact_RpoZ"/>
    <property type="match status" value="1"/>
</dbReference>
<dbReference type="InterPro" id="IPR003716">
    <property type="entry name" value="DNA-dir_RNA_pol_omega"/>
</dbReference>
<dbReference type="InterPro" id="IPR006110">
    <property type="entry name" value="Pol_omega/Rpo6/RPB6"/>
</dbReference>
<dbReference type="InterPro" id="IPR036161">
    <property type="entry name" value="RPB6/omega-like_sf"/>
</dbReference>
<dbReference type="NCBIfam" id="TIGR00690">
    <property type="entry name" value="rpoZ"/>
    <property type="match status" value="1"/>
</dbReference>
<dbReference type="PANTHER" id="PTHR34476">
    <property type="entry name" value="DNA-DIRECTED RNA POLYMERASE SUBUNIT OMEGA"/>
    <property type="match status" value="1"/>
</dbReference>
<dbReference type="PANTHER" id="PTHR34476:SF1">
    <property type="entry name" value="DNA-DIRECTED RNA POLYMERASE SUBUNIT OMEGA"/>
    <property type="match status" value="1"/>
</dbReference>
<dbReference type="Pfam" id="PF01192">
    <property type="entry name" value="RNA_pol_Rpb6"/>
    <property type="match status" value="1"/>
</dbReference>
<dbReference type="SMART" id="SM01409">
    <property type="entry name" value="RNA_pol_Rpb6"/>
    <property type="match status" value="1"/>
</dbReference>
<dbReference type="SUPFAM" id="SSF63562">
    <property type="entry name" value="RPB6/omega subunit-like"/>
    <property type="match status" value="1"/>
</dbReference>
<reference key="1">
    <citation type="journal article" date="2008" name="J. Bacteriol.">
        <title>Comparative genome sequence analysis of multidrug-resistant Acinetobacter baumannii.</title>
        <authorList>
            <person name="Adams M.D."/>
            <person name="Goglin K."/>
            <person name="Molyneaux N."/>
            <person name="Hujer K.M."/>
            <person name="Lavender H."/>
            <person name="Jamison J.J."/>
            <person name="MacDonald I.J."/>
            <person name="Martin K.M."/>
            <person name="Russo T."/>
            <person name="Campagnari A.A."/>
            <person name="Hujer A.M."/>
            <person name="Bonomo R.A."/>
            <person name="Gill S.R."/>
        </authorList>
    </citation>
    <scope>NUCLEOTIDE SEQUENCE [LARGE SCALE GENOMIC DNA]</scope>
    <source>
        <strain>AB307-0294</strain>
    </source>
</reference>
<sequence length="92" mass="10445">MARVTVEDCLDHVDNRFELVLVASKRARQLARQGMEPTVEWDNDKPTVVALREIAVGHVTKEILKQREQDYQTSSLDLALSTNSLNLEGFSF</sequence>
<comment type="function">
    <text evidence="1">Promotes RNA polymerase assembly. Latches the N- and C-terminal regions of the beta' subunit thereby facilitating its interaction with the beta and alpha subunits.</text>
</comment>
<comment type="catalytic activity">
    <reaction evidence="1">
        <text>RNA(n) + a ribonucleoside 5'-triphosphate = RNA(n+1) + diphosphate</text>
        <dbReference type="Rhea" id="RHEA:21248"/>
        <dbReference type="Rhea" id="RHEA-COMP:14527"/>
        <dbReference type="Rhea" id="RHEA-COMP:17342"/>
        <dbReference type="ChEBI" id="CHEBI:33019"/>
        <dbReference type="ChEBI" id="CHEBI:61557"/>
        <dbReference type="ChEBI" id="CHEBI:140395"/>
        <dbReference type="EC" id="2.7.7.6"/>
    </reaction>
</comment>
<comment type="subunit">
    <text evidence="1">The RNAP catalytic core consists of 2 alpha, 1 beta, 1 beta' and 1 omega subunit. When a sigma factor is associated with the core the holoenzyme is formed, which can initiate transcription.</text>
</comment>
<comment type="similarity">
    <text evidence="1">Belongs to the RNA polymerase subunit omega family.</text>
</comment>
<protein>
    <recommendedName>
        <fullName evidence="1">DNA-directed RNA polymerase subunit omega</fullName>
        <shortName evidence="1">RNAP omega subunit</shortName>
        <ecNumber evidence="1">2.7.7.6</ecNumber>
    </recommendedName>
    <alternativeName>
        <fullName evidence="1">RNA polymerase omega subunit</fullName>
    </alternativeName>
    <alternativeName>
        <fullName evidence="1">Transcriptase subunit omega</fullName>
    </alternativeName>
</protein>
<proteinExistence type="inferred from homology"/>
<accession>B7GVQ9</accession>
<organism>
    <name type="scientific">Acinetobacter baumannii (strain AB307-0294)</name>
    <dbReference type="NCBI Taxonomy" id="557600"/>
    <lineage>
        <taxon>Bacteria</taxon>
        <taxon>Pseudomonadati</taxon>
        <taxon>Pseudomonadota</taxon>
        <taxon>Gammaproteobacteria</taxon>
        <taxon>Moraxellales</taxon>
        <taxon>Moraxellaceae</taxon>
        <taxon>Acinetobacter</taxon>
        <taxon>Acinetobacter calcoaceticus/baumannii complex</taxon>
    </lineage>
</organism>
<keyword id="KW-0240">DNA-directed RNA polymerase</keyword>
<keyword id="KW-0548">Nucleotidyltransferase</keyword>
<keyword id="KW-0804">Transcription</keyword>
<keyword id="KW-0808">Transferase</keyword>
<feature type="chain" id="PRO_1000121174" description="DNA-directed RNA polymerase subunit omega">
    <location>
        <begin position="1"/>
        <end position="92"/>
    </location>
</feature>
<name>RPOZ_ACIB3</name>